<feature type="chain" id="PRO_1000142061" description="Large ribosomal subunit protein uL4">
    <location>
        <begin position="1"/>
        <end position="200"/>
    </location>
</feature>
<feature type="region of interest" description="Disordered" evidence="2">
    <location>
        <begin position="42"/>
        <end position="65"/>
    </location>
</feature>
<accession>B7GW03</accession>
<reference key="1">
    <citation type="journal article" date="2008" name="J. Bacteriol.">
        <title>Comparative genome sequence analysis of multidrug-resistant Acinetobacter baumannii.</title>
        <authorList>
            <person name="Adams M.D."/>
            <person name="Goglin K."/>
            <person name="Molyneaux N."/>
            <person name="Hujer K.M."/>
            <person name="Lavender H."/>
            <person name="Jamison J.J."/>
            <person name="MacDonald I.J."/>
            <person name="Martin K.M."/>
            <person name="Russo T."/>
            <person name="Campagnari A.A."/>
            <person name="Hujer A.M."/>
            <person name="Bonomo R.A."/>
            <person name="Gill S.R."/>
        </authorList>
    </citation>
    <scope>NUCLEOTIDE SEQUENCE [LARGE SCALE GENOMIC DNA]</scope>
    <source>
        <strain>AB307-0294</strain>
    </source>
</reference>
<dbReference type="EMBL" id="CP001172">
    <property type="protein sequence ID" value="ACJ57614.1"/>
    <property type="molecule type" value="Genomic_DNA"/>
</dbReference>
<dbReference type="RefSeq" id="WP_001050255.1">
    <property type="nucleotide sequence ID" value="NZ_CP001172.1"/>
</dbReference>
<dbReference type="SMR" id="B7GW03"/>
<dbReference type="GeneID" id="92895316"/>
<dbReference type="HOGENOM" id="CLU_041575_5_2_6"/>
<dbReference type="Proteomes" id="UP000006924">
    <property type="component" value="Chromosome"/>
</dbReference>
<dbReference type="GO" id="GO:1990904">
    <property type="term" value="C:ribonucleoprotein complex"/>
    <property type="evidence" value="ECO:0007669"/>
    <property type="project" value="UniProtKB-KW"/>
</dbReference>
<dbReference type="GO" id="GO:0005840">
    <property type="term" value="C:ribosome"/>
    <property type="evidence" value="ECO:0007669"/>
    <property type="project" value="UniProtKB-KW"/>
</dbReference>
<dbReference type="GO" id="GO:0019843">
    <property type="term" value="F:rRNA binding"/>
    <property type="evidence" value="ECO:0007669"/>
    <property type="project" value="UniProtKB-UniRule"/>
</dbReference>
<dbReference type="GO" id="GO:0003735">
    <property type="term" value="F:structural constituent of ribosome"/>
    <property type="evidence" value="ECO:0007669"/>
    <property type="project" value="InterPro"/>
</dbReference>
<dbReference type="GO" id="GO:0006412">
    <property type="term" value="P:translation"/>
    <property type="evidence" value="ECO:0007669"/>
    <property type="project" value="UniProtKB-UniRule"/>
</dbReference>
<dbReference type="Gene3D" id="3.40.1370.10">
    <property type="match status" value="1"/>
</dbReference>
<dbReference type="HAMAP" id="MF_01328_B">
    <property type="entry name" value="Ribosomal_uL4_B"/>
    <property type="match status" value="1"/>
</dbReference>
<dbReference type="InterPro" id="IPR002136">
    <property type="entry name" value="Ribosomal_uL4"/>
</dbReference>
<dbReference type="InterPro" id="IPR013005">
    <property type="entry name" value="Ribosomal_uL4-like"/>
</dbReference>
<dbReference type="InterPro" id="IPR023574">
    <property type="entry name" value="Ribosomal_uL4_dom_sf"/>
</dbReference>
<dbReference type="NCBIfam" id="TIGR03953">
    <property type="entry name" value="rplD_bact"/>
    <property type="match status" value="1"/>
</dbReference>
<dbReference type="PANTHER" id="PTHR10746">
    <property type="entry name" value="50S RIBOSOMAL PROTEIN L4"/>
    <property type="match status" value="1"/>
</dbReference>
<dbReference type="PANTHER" id="PTHR10746:SF6">
    <property type="entry name" value="LARGE RIBOSOMAL SUBUNIT PROTEIN UL4M"/>
    <property type="match status" value="1"/>
</dbReference>
<dbReference type="Pfam" id="PF00573">
    <property type="entry name" value="Ribosomal_L4"/>
    <property type="match status" value="1"/>
</dbReference>
<dbReference type="SUPFAM" id="SSF52166">
    <property type="entry name" value="Ribosomal protein L4"/>
    <property type="match status" value="1"/>
</dbReference>
<protein>
    <recommendedName>
        <fullName evidence="1">Large ribosomal subunit protein uL4</fullName>
    </recommendedName>
    <alternativeName>
        <fullName evidence="3">50S ribosomal protein L4</fullName>
    </alternativeName>
</protein>
<comment type="function">
    <text evidence="1">One of the primary rRNA binding proteins, this protein initially binds near the 5'-end of the 23S rRNA. It is important during the early stages of 50S assembly. It makes multiple contacts with different domains of the 23S rRNA in the assembled 50S subunit and ribosome.</text>
</comment>
<comment type="function">
    <text evidence="1">Forms part of the polypeptide exit tunnel.</text>
</comment>
<comment type="subunit">
    <text evidence="1">Part of the 50S ribosomal subunit.</text>
</comment>
<comment type="similarity">
    <text evidence="1">Belongs to the universal ribosomal protein uL4 family.</text>
</comment>
<evidence type="ECO:0000255" key="1">
    <source>
        <dbReference type="HAMAP-Rule" id="MF_01328"/>
    </source>
</evidence>
<evidence type="ECO:0000256" key="2">
    <source>
        <dbReference type="SAM" id="MobiDB-lite"/>
    </source>
</evidence>
<evidence type="ECO:0000305" key="3"/>
<name>RL4_ACIB3</name>
<gene>
    <name evidence="1" type="primary">rplD</name>
    <name type="ordered locus">ABBFA_000433</name>
</gene>
<sequence>MNLKTVSGSAVELSEVAFGREFNEALVHQVVTAYLAGGRQGTRAHKSRADVSGGGKKPFRQKGTGRARAGSIRSPIWVGGGKTFAARPQDWSQKVNRKMYRGAMQCILAELVRQDRLVLVEEFAVAAPKTKELLAKLNDLNAARALIVTDAVDENLYLAARNLPHVDVVDATAIDPVSLIAFDKVVMSVAAAKKIEVELG</sequence>
<keyword id="KW-0687">Ribonucleoprotein</keyword>
<keyword id="KW-0689">Ribosomal protein</keyword>
<keyword id="KW-0694">RNA-binding</keyword>
<keyword id="KW-0699">rRNA-binding</keyword>
<proteinExistence type="inferred from homology"/>
<organism>
    <name type="scientific">Acinetobacter baumannii (strain AB307-0294)</name>
    <dbReference type="NCBI Taxonomy" id="557600"/>
    <lineage>
        <taxon>Bacteria</taxon>
        <taxon>Pseudomonadati</taxon>
        <taxon>Pseudomonadota</taxon>
        <taxon>Gammaproteobacteria</taxon>
        <taxon>Moraxellales</taxon>
        <taxon>Moraxellaceae</taxon>
        <taxon>Acinetobacter</taxon>
        <taxon>Acinetobacter calcoaceticus/baumannii complex</taxon>
    </lineage>
</organism>